<dbReference type="EC" id="3.1.3.12"/>
<dbReference type="EMBL" id="Z97179">
    <property type="protein sequence ID" value="CAB09930.1"/>
    <property type="molecule type" value="Genomic_DNA"/>
</dbReference>
<dbReference type="EMBL" id="U00015">
    <property type="protein sequence ID" value="AAC43238.1"/>
    <property type="molecule type" value="Genomic_DNA"/>
</dbReference>
<dbReference type="EMBL" id="AL583918">
    <property type="protein sequence ID" value="CAC29922.1"/>
    <property type="molecule type" value="Genomic_DNA"/>
</dbReference>
<dbReference type="PIR" id="S72829">
    <property type="entry name" value="S72829"/>
</dbReference>
<dbReference type="RefSeq" id="NP_301392.1">
    <property type="nucleotide sequence ID" value="NC_002677.1"/>
</dbReference>
<dbReference type="RefSeq" id="WP_010907716.1">
    <property type="nucleotide sequence ID" value="NC_002677.1"/>
</dbReference>
<dbReference type="SMR" id="Q49734"/>
<dbReference type="STRING" id="272631.gene:17574233"/>
<dbReference type="KEGG" id="mle:ML0414"/>
<dbReference type="PATRIC" id="fig|272631.5.peg.704"/>
<dbReference type="Leproma" id="ML0414"/>
<dbReference type="eggNOG" id="COG0637">
    <property type="taxonomic scope" value="Bacteria"/>
</dbReference>
<dbReference type="eggNOG" id="COG1877">
    <property type="taxonomic scope" value="Bacteria"/>
</dbReference>
<dbReference type="HOGENOM" id="CLU_037265_4_1_11"/>
<dbReference type="OrthoDB" id="9816160at2"/>
<dbReference type="UniPathway" id="UPA00299"/>
<dbReference type="Proteomes" id="UP000000806">
    <property type="component" value="Chromosome"/>
</dbReference>
<dbReference type="GO" id="GO:0046872">
    <property type="term" value="F:metal ion binding"/>
    <property type="evidence" value="ECO:0007669"/>
    <property type="project" value="UniProtKB-KW"/>
</dbReference>
<dbReference type="GO" id="GO:0004805">
    <property type="term" value="F:trehalose-phosphatase activity"/>
    <property type="evidence" value="ECO:0007669"/>
    <property type="project" value="UniProtKB-EC"/>
</dbReference>
<dbReference type="GO" id="GO:0005992">
    <property type="term" value="P:trehalose biosynthetic process"/>
    <property type="evidence" value="ECO:0007669"/>
    <property type="project" value="UniProtKB-UniPathway"/>
</dbReference>
<dbReference type="CDD" id="cd01627">
    <property type="entry name" value="HAD_TPP"/>
    <property type="match status" value="1"/>
</dbReference>
<dbReference type="FunFam" id="3.30.70.1020:FF:000007">
    <property type="entry name" value="Trehalose 6-phosphate phosphatase"/>
    <property type="match status" value="1"/>
</dbReference>
<dbReference type="Gene3D" id="3.40.50.1000">
    <property type="entry name" value="HAD superfamily/HAD-like"/>
    <property type="match status" value="2"/>
</dbReference>
<dbReference type="Gene3D" id="3.30.70.1020">
    <property type="entry name" value="Trehalose-6-phosphate phosphatase related protein, domain 2"/>
    <property type="match status" value="1"/>
</dbReference>
<dbReference type="InterPro" id="IPR036412">
    <property type="entry name" value="HAD-like_sf"/>
</dbReference>
<dbReference type="InterPro" id="IPR006379">
    <property type="entry name" value="HAD-SF_hydro_IIB"/>
</dbReference>
<dbReference type="InterPro" id="IPR023214">
    <property type="entry name" value="HAD_sf"/>
</dbReference>
<dbReference type="InterPro" id="IPR044651">
    <property type="entry name" value="OTSB-like"/>
</dbReference>
<dbReference type="InterPro" id="IPR003337">
    <property type="entry name" value="Trehalose_PPase"/>
</dbReference>
<dbReference type="NCBIfam" id="TIGR01484">
    <property type="entry name" value="HAD-SF-IIB"/>
    <property type="match status" value="1"/>
</dbReference>
<dbReference type="NCBIfam" id="TIGR00685">
    <property type="entry name" value="T6PP"/>
    <property type="match status" value="1"/>
</dbReference>
<dbReference type="PANTHER" id="PTHR43768">
    <property type="entry name" value="TREHALOSE 6-PHOSPHATE PHOSPHATASE"/>
    <property type="match status" value="1"/>
</dbReference>
<dbReference type="PANTHER" id="PTHR43768:SF3">
    <property type="entry name" value="TREHALOSE 6-PHOSPHATE PHOSPHATASE"/>
    <property type="match status" value="1"/>
</dbReference>
<dbReference type="Pfam" id="PF02358">
    <property type="entry name" value="Trehalose_PPase"/>
    <property type="match status" value="1"/>
</dbReference>
<dbReference type="SUPFAM" id="SSF56784">
    <property type="entry name" value="HAD-like"/>
    <property type="match status" value="2"/>
</dbReference>
<keyword id="KW-0378">Hydrolase</keyword>
<keyword id="KW-0460">Magnesium</keyword>
<keyword id="KW-0479">Metal-binding</keyword>
<keyword id="KW-1185">Reference proteome</keyword>
<feature type="chain" id="PRO_0000370703" description="Trehalose-phosphate phosphatase">
    <location>
        <begin position="1"/>
        <end position="429"/>
    </location>
</feature>
<feature type="active site" description="Nucleophile" evidence="1">
    <location>
        <position position="181"/>
    </location>
</feature>
<feature type="binding site" evidence="1">
    <location>
        <begin position="181"/>
        <end position="183"/>
    </location>
    <ligand>
        <name>substrate</name>
    </ligand>
</feature>
<feature type="binding site" evidence="1">
    <location>
        <position position="181"/>
    </location>
    <ligand>
        <name>Mg(2+)</name>
        <dbReference type="ChEBI" id="CHEBI:18420"/>
    </ligand>
</feature>
<feature type="binding site" evidence="1">
    <location>
        <position position="183"/>
    </location>
    <ligand>
        <name>Mg(2+)</name>
        <dbReference type="ChEBI" id="CHEBI:18420"/>
    </ligand>
</feature>
<feature type="binding site" evidence="1">
    <location>
        <position position="368"/>
    </location>
    <ligand>
        <name>Mg(2+)</name>
        <dbReference type="ChEBI" id="CHEBI:18420"/>
    </ligand>
</feature>
<organism>
    <name type="scientific">Mycobacterium leprae (strain TN)</name>
    <dbReference type="NCBI Taxonomy" id="272631"/>
    <lineage>
        <taxon>Bacteria</taxon>
        <taxon>Bacillati</taxon>
        <taxon>Actinomycetota</taxon>
        <taxon>Actinomycetes</taxon>
        <taxon>Mycobacteriales</taxon>
        <taxon>Mycobacteriaceae</taxon>
        <taxon>Mycobacterium</taxon>
    </lineage>
</organism>
<name>OTSB_MYCLE</name>
<protein>
    <recommendedName>
        <fullName>Trehalose-phosphate phosphatase</fullName>
        <shortName>TPP</shortName>
        <ecNumber>3.1.3.12</ecNumber>
    </recommendedName>
    <alternativeName>
        <fullName>Trehalose-6-phosphate phosphatase</fullName>
    </alternativeName>
</protein>
<gene>
    <name type="primary">otsB</name>
    <name type="ordered locus">ML0414</name>
    <name type="ORF">MLCL383.17c</name>
</gene>
<comment type="function">
    <text evidence="1">Removes the phosphate from trehalose 6-phosphate to produce free trehalose.</text>
</comment>
<comment type="catalytic activity">
    <reaction>
        <text>alpha,alpha-trehalose 6-phosphate + H2O = alpha,alpha-trehalose + phosphate</text>
        <dbReference type="Rhea" id="RHEA:23420"/>
        <dbReference type="ChEBI" id="CHEBI:15377"/>
        <dbReference type="ChEBI" id="CHEBI:16551"/>
        <dbReference type="ChEBI" id="CHEBI:43474"/>
        <dbReference type="ChEBI" id="CHEBI:58429"/>
        <dbReference type="EC" id="3.1.3.12"/>
    </reaction>
</comment>
<comment type="cofactor">
    <cofactor evidence="1">
        <name>Mg(2+)</name>
        <dbReference type="ChEBI" id="CHEBI:18420"/>
    </cofactor>
</comment>
<comment type="pathway">
    <text>Glycan biosynthesis; trehalose biosynthesis.</text>
</comment>
<comment type="similarity">
    <text evidence="2">Belongs to the trehalose phosphatase family.</text>
</comment>
<evidence type="ECO:0000250" key="1"/>
<evidence type="ECO:0000305" key="2"/>
<accession>Q49734</accession>
<accession>O08220</accession>
<reference key="1">
    <citation type="journal article" date="1993" name="Mol. Microbiol.">
        <title>Use of an ordered cosmid library to deduce the genomic organization of Mycobacterium leprae.</title>
        <authorList>
            <person name="Eiglmeier K."/>
            <person name="Honore N."/>
            <person name="Woods S.A."/>
            <person name="Caudron B."/>
            <person name="Cole S.T."/>
        </authorList>
    </citation>
    <scope>NUCLEOTIDE SEQUENCE [GENOMIC DNA]</scope>
</reference>
<reference key="2">
    <citation type="submission" date="1994-03" db="EMBL/GenBank/DDBJ databases">
        <authorList>
            <person name="Smith D.R."/>
            <person name="Robison K."/>
        </authorList>
    </citation>
    <scope>NUCLEOTIDE SEQUENCE [GENOMIC DNA]</scope>
</reference>
<reference key="3">
    <citation type="journal article" date="2001" name="Nature">
        <title>Massive gene decay in the leprosy bacillus.</title>
        <authorList>
            <person name="Cole S.T."/>
            <person name="Eiglmeier K."/>
            <person name="Parkhill J."/>
            <person name="James K.D."/>
            <person name="Thomson N.R."/>
            <person name="Wheeler P.R."/>
            <person name="Honore N."/>
            <person name="Garnier T."/>
            <person name="Churcher C.M."/>
            <person name="Harris D.E."/>
            <person name="Mungall K.L."/>
            <person name="Basham D."/>
            <person name="Brown D."/>
            <person name="Chillingworth T."/>
            <person name="Connor R."/>
            <person name="Davies R.M."/>
            <person name="Devlin K."/>
            <person name="Duthoy S."/>
            <person name="Feltwell T."/>
            <person name="Fraser A."/>
            <person name="Hamlin N."/>
            <person name="Holroyd S."/>
            <person name="Hornsby T."/>
            <person name="Jagels K."/>
            <person name="Lacroix C."/>
            <person name="Maclean J."/>
            <person name="Moule S."/>
            <person name="Murphy L.D."/>
            <person name="Oliver K."/>
            <person name="Quail M.A."/>
            <person name="Rajandream M.A."/>
            <person name="Rutherford K.M."/>
            <person name="Rutter S."/>
            <person name="Seeger K."/>
            <person name="Simon S."/>
            <person name="Simmonds M."/>
            <person name="Skelton J."/>
            <person name="Squares R."/>
            <person name="Squares S."/>
            <person name="Stevens K."/>
            <person name="Taylor K."/>
            <person name="Whitehead S."/>
            <person name="Woodward J.R."/>
            <person name="Barrell B.G."/>
        </authorList>
    </citation>
    <scope>NUCLEOTIDE SEQUENCE [LARGE SCALE GENOMIC DNA]</scope>
    <source>
        <strain>TN</strain>
    </source>
</reference>
<sequence length="429" mass="45888">MPVTIDPRRHSAALFDLDAVVTDTPLDSTVTLVRQLQGIGVGTAVFSTNRNSQGVLTATGLDHLFPVHVDGLASGKVTILVAAANRLMAQPGRCVVVAVDAAGITAARYGGFALVLGLVIGEDQTGHRDTLRNSGADTVVADLGEVIVRTGDRRMSELPDALQTLGLTDDLTARQPAVFFDFDGTLSDIVDDPDSARPVPGATEALQKLATHCPVAILSGRDLADVIKRIGVPGIWYSGSHGFESTAPDGTHHQNDAAEATIPILEQAATQLRDQLGPIPGVMVEHKRFGVAVHYRNVARDRVNEVAVAVRTAGQRNALRVTTGREVIELRPDIDWDKGKTLHWVIDRLHHAGTQVGSASLMPICLGDDITDEDAFDAVRHTDVGGIPIVVRHTEDGNRATAALFTLDSPMHVSEFTERLARQLSDTQR</sequence>
<proteinExistence type="inferred from homology"/>